<comment type="function">
    <text>Catalyzes the hydrolysis of UDP-3-O-myristoyl-N-acetylglucosamine to form UDP-3-O-myristoylglucosamine and acetate, the committed step in lipid A biosynthesis.</text>
</comment>
<comment type="function">
    <text evidence="1">Involved in unsaturated fatty acids biosynthesis. Catalyzes the dehydration of short chain beta-hydroxyacyl-ACPs and long chain saturated and unsaturated beta-hydroxyacyl-ACPs.</text>
</comment>
<comment type="catalytic activity">
    <reaction>
        <text>a UDP-3-O-[(3R)-3-hydroxyacyl]-N-acetyl-alpha-D-glucosamine + H2O = a UDP-3-O-[(3R)-3-hydroxyacyl]-alpha-D-glucosamine + acetate</text>
        <dbReference type="Rhea" id="RHEA:67816"/>
        <dbReference type="ChEBI" id="CHEBI:15377"/>
        <dbReference type="ChEBI" id="CHEBI:30089"/>
        <dbReference type="ChEBI" id="CHEBI:137740"/>
        <dbReference type="ChEBI" id="CHEBI:173225"/>
        <dbReference type="EC" id="3.5.1.108"/>
    </reaction>
</comment>
<comment type="catalytic activity">
    <reaction>
        <text>a (3R)-hydroxyacyl-[ACP] = a (2E)-enoyl-[ACP] + H2O</text>
        <dbReference type="Rhea" id="RHEA:13097"/>
        <dbReference type="Rhea" id="RHEA-COMP:9925"/>
        <dbReference type="Rhea" id="RHEA-COMP:9945"/>
        <dbReference type="ChEBI" id="CHEBI:15377"/>
        <dbReference type="ChEBI" id="CHEBI:78784"/>
        <dbReference type="ChEBI" id="CHEBI:78827"/>
        <dbReference type="EC" id="4.2.1.59"/>
    </reaction>
</comment>
<comment type="cofactor">
    <cofactor>
        <name>Zn(2+)</name>
        <dbReference type="ChEBI" id="CHEBI:29105"/>
    </cofactor>
</comment>
<comment type="pathway">
    <text>Glycolipid biosynthesis; lipid IV(A) biosynthesis; lipid IV(A) from (3R)-3-hydroxytetradecanoyl-[acyl-carrier-protein] and UDP-N-acetyl-alpha-D-glucosamine: step 2/6.</text>
</comment>
<comment type="subcellular location">
    <subcellularLocation>
        <location evidence="1">Cytoplasm</location>
    </subcellularLocation>
</comment>
<comment type="similarity">
    <text evidence="2">In the N-terminal section; belongs to the LpxC family.</text>
</comment>
<comment type="similarity">
    <text evidence="2">In the C-terminal section; belongs to the thioester dehydratase family.</text>
</comment>
<name>LPXZ_PORGI</name>
<gene>
    <name type="primary">lpxC/fabZ</name>
    <name type="ordered locus">PG_0071</name>
</gene>
<protein>
    <recommendedName>
        <fullName>Bifunctional enzyme LpxC/FabZ</fullName>
    </recommendedName>
    <domain>
        <recommendedName>
            <fullName>UDP-3-O-acyl-N-acetylglucosamine deacetylase</fullName>
            <shortName>UDP-3-O-acyl-GlcNAc deacetylase</shortName>
            <ecNumber>3.5.1.108</ecNumber>
        </recommendedName>
        <alternativeName>
            <fullName>UDP-3-O-[R-3-hydroxymyristoyl]-N-acetylglucosamine deacetylase</fullName>
        </alternativeName>
    </domain>
    <domain>
        <recommendedName>
            <fullName>3-hydroxyacyl-[acyl-carrier-protein] dehydratase FabZ</fullName>
            <ecNumber>4.2.1.59</ecNumber>
        </recommendedName>
        <alternativeName>
            <fullName>(3R)-hydroxymyristoyl-[acyl-carrier-protein] dehydratase</fullName>
            <shortName>(3R)-hydroxymyristoyl-ACP dehydrase</shortName>
        </alternativeName>
        <alternativeName>
            <fullName>Beta-hydroxyacyl-ACP dehydratase</fullName>
        </alternativeName>
    </domain>
</protein>
<organism>
    <name type="scientific">Porphyromonas gingivalis (strain ATCC BAA-308 / W83)</name>
    <dbReference type="NCBI Taxonomy" id="242619"/>
    <lineage>
        <taxon>Bacteria</taxon>
        <taxon>Pseudomonadati</taxon>
        <taxon>Bacteroidota</taxon>
        <taxon>Bacteroidia</taxon>
        <taxon>Bacteroidales</taxon>
        <taxon>Porphyromonadaceae</taxon>
        <taxon>Porphyromonas</taxon>
    </lineage>
</organism>
<feature type="chain" id="PRO_0000191976" description="Bifunctional enzyme LpxC/FabZ">
    <location>
        <begin position="1"/>
        <end position="462"/>
    </location>
</feature>
<feature type="region of interest" description="UDP-3-O-acyl-N-acetylglucosamine deacetylase">
    <location>
        <begin position="1"/>
        <end position="302"/>
    </location>
</feature>
<feature type="region of interest" description="3-hydroxyacyl-[acyl-carrier-protein] dehydratase">
    <location>
        <begin position="303"/>
        <end position="462"/>
    </location>
</feature>
<feature type="active site" description="Proton donor" evidence="1">
    <location>
        <position position="287"/>
    </location>
</feature>
<feature type="active site" evidence="1">
    <location>
        <position position="364"/>
    </location>
</feature>
<feature type="binding site" evidence="1">
    <location>
        <position position="78"/>
    </location>
    <ligand>
        <name>Zn(2+)</name>
        <dbReference type="ChEBI" id="CHEBI:29105"/>
    </ligand>
</feature>
<feature type="binding site" evidence="1">
    <location>
        <position position="260"/>
    </location>
    <ligand>
        <name>Zn(2+)</name>
        <dbReference type="ChEBI" id="CHEBI:29105"/>
    </ligand>
</feature>
<feature type="binding site" evidence="1">
    <location>
        <position position="264"/>
    </location>
    <ligand>
        <name>Zn(2+)</name>
        <dbReference type="ChEBI" id="CHEBI:29105"/>
    </ligand>
</feature>
<keyword id="KW-0963">Cytoplasm</keyword>
<keyword id="KW-0378">Hydrolase</keyword>
<keyword id="KW-0441">Lipid A biosynthesis</keyword>
<keyword id="KW-0444">Lipid biosynthesis</keyword>
<keyword id="KW-0443">Lipid metabolism</keyword>
<keyword id="KW-0456">Lyase</keyword>
<keyword id="KW-0479">Metal-binding</keyword>
<keyword id="KW-0511">Multifunctional enzyme</keyword>
<keyword id="KW-1185">Reference proteome</keyword>
<keyword id="KW-0862">Zinc</keyword>
<accession>Q7MXT8</accession>
<evidence type="ECO:0000250" key="1"/>
<evidence type="ECO:0000305" key="2"/>
<proteinExistence type="inferred from homology"/>
<dbReference type="EC" id="3.5.1.108"/>
<dbReference type="EC" id="4.2.1.59"/>
<dbReference type="EMBL" id="AE015924">
    <property type="protein sequence ID" value="AAQ65320.1"/>
    <property type="molecule type" value="Genomic_DNA"/>
</dbReference>
<dbReference type="RefSeq" id="WP_005873963.1">
    <property type="nucleotide sequence ID" value="NC_002950.2"/>
</dbReference>
<dbReference type="SMR" id="Q7MXT8"/>
<dbReference type="STRING" id="242619.PG_0071"/>
<dbReference type="EnsemblBacteria" id="AAQ65320">
    <property type="protein sequence ID" value="AAQ65320"/>
    <property type="gene ID" value="PG_0071"/>
</dbReference>
<dbReference type="GeneID" id="29257155"/>
<dbReference type="KEGG" id="pgi:PG_0071"/>
<dbReference type="eggNOG" id="COG0764">
    <property type="taxonomic scope" value="Bacteria"/>
</dbReference>
<dbReference type="eggNOG" id="COG0774">
    <property type="taxonomic scope" value="Bacteria"/>
</dbReference>
<dbReference type="HOGENOM" id="CLU_046528_2_0_10"/>
<dbReference type="UniPathway" id="UPA00359">
    <property type="reaction ID" value="UER00478"/>
</dbReference>
<dbReference type="Proteomes" id="UP000000588">
    <property type="component" value="Chromosome"/>
</dbReference>
<dbReference type="GO" id="GO:0005737">
    <property type="term" value="C:cytoplasm"/>
    <property type="evidence" value="ECO:0007669"/>
    <property type="project" value="UniProtKB-SubCell"/>
</dbReference>
<dbReference type="GO" id="GO:0016020">
    <property type="term" value="C:membrane"/>
    <property type="evidence" value="ECO:0007669"/>
    <property type="project" value="GOC"/>
</dbReference>
<dbReference type="GO" id="GO:0019171">
    <property type="term" value="F:(3R)-hydroxyacyl-[acyl-carrier-protein] dehydratase activity"/>
    <property type="evidence" value="ECO:0007669"/>
    <property type="project" value="UniProtKB-EC"/>
</dbReference>
<dbReference type="GO" id="GO:0046872">
    <property type="term" value="F:metal ion binding"/>
    <property type="evidence" value="ECO:0007669"/>
    <property type="project" value="UniProtKB-KW"/>
</dbReference>
<dbReference type="GO" id="GO:0103117">
    <property type="term" value="F:UDP-3-O-acyl-N-acetylglucosamine deacetylase activity"/>
    <property type="evidence" value="ECO:0007669"/>
    <property type="project" value="UniProtKB-UniRule"/>
</dbReference>
<dbReference type="GO" id="GO:0006633">
    <property type="term" value="P:fatty acid biosynthetic process"/>
    <property type="evidence" value="ECO:0007669"/>
    <property type="project" value="UniProtKB-UniRule"/>
</dbReference>
<dbReference type="GO" id="GO:0009245">
    <property type="term" value="P:lipid A biosynthetic process"/>
    <property type="evidence" value="ECO:0007669"/>
    <property type="project" value="UniProtKB-UniRule"/>
</dbReference>
<dbReference type="CDD" id="cd01288">
    <property type="entry name" value="FabZ"/>
    <property type="match status" value="1"/>
</dbReference>
<dbReference type="FunFam" id="3.10.129.10:FF:000001">
    <property type="entry name" value="3-hydroxyacyl-[acyl-carrier-protein] dehydratase FabZ"/>
    <property type="match status" value="1"/>
</dbReference>
<dbReference type="Gene3D" id="3.10.129.10">
    <property type="entry name" value="Hotdog Thioesterase"/>
    <property type="match status" value="1"/>
</dbReference>
<dbReference type="Gene3D" id="3.30.230.20">
    <property type="entry name" value="lpxc deacetylase, domain 1"/>
    <property type="match status" value="1"/>
</dbReference>
<dbReference type="Gene3D" id="3.30.1700.10">
    <property type="entry name" value="lpxc deacetylase, domain 2"/>
    <property type="match status" value="1"/>
</dbReference>
<dbReference type="HAMAP" id="MF_00406">
    <property type="entry name" value="FabZ"/>
    <property type="match status" value="1"/>
</dbReference>
<dbReference type="HAMAP" id="MF_00388">
    <property type="entry name" value="LpxC"/>
    <property type="match status" value="1"/>
</dbReference>
<dbReference type="InterPro" id="IPR013114">
    <property type="entry name" value="FabA_FabZ"/>
</dbReference>
<dbReference type="InterPro" id="IPR010084">
    <property type="entry name" value="FabZ"/>
</dbReference>
<dbReference type="InterPro" id="IPR029069">
    <property type="entry name" value="HotDog_dom_sf"/>
</dbReference>
<dbReference type="InterPro" id="IPR020568">
    <property type="entry name" value="Ribosomal_Su5_D2-typ_SF"/>
</dbReference>
<dbReference type="InterPro" id="IPR004463">
    <property type="entry name" value="UDP-acyl_GlcNac_deAcase"/>
</dbReference>
<dbReference type="InterPro" id="IPR011334">
    <property type="entry name" value="UDP-acyl_GlcNac_deAcase_C"/>
</dbReference>
<dbReference type="InterPro" id="IPR015870">
    <property type="entry name" value="UDP-acyl_N-AcGlcN_deAcase_N"/>
</dbReference>
<dbReference type="NCBIfam" id="TIGR01750">
    <property type="entry name" value="fabZ"/>
    <property type="match status" value="1"/>
</dbReference>
<dbReference type="NCBIfam" id="NF000582">
    <property type="entry name" value="PRK00006.1"/>
    <property type="match status" value="1"/>
</dbReference>
<dbReference type="NCBIfam" id="NF009667">
    <property type="entry name" value="PRK13188.1"/>
    <property type="match status" value="1"/>
</dbReference>
<dbReference type="PANTHER" id="PTHR33694">
    <property type="entry name" value="UDP-3-O-ACYL-N-ACETYLGLUCOSAMINE DEACETYLASE 1, MITOCHONDRIAL-RELATED"/>
    <property type="match status" value="1"/>
</dbReference>
<dbReference type="PANTHER" id="PTHR33694:SF1">
    <property type="entry name" value="UDP-3-O-ACYL-N-ACETYLGLUCOSAMINE DEACETYLASE 1, MITOCHONDRIAL-RELATED"/>
    <property type="match status" value="1"/>
</dbReference>
<dbReference type="Pfam" id="PF07977">
    <property type="entry name" value="FabA"/>
    <property type="match status" value="1"/>
</dbReference>
<dbReference type="Pfam" id="PF03331">
    <property type="entry name" value="LpxC"/>
    <property type="match status" value="2"/>
</dbReference>
<dbReference type="SUPFAM" id="SSF54211">
    <property type="entry name" value="Ribosomal protein S5 domain 2-like"/>
    <property type="match status" value="2"/>
</dbReference>
<dbReference type="SUPFAM" id="SSF54637">
    <property type="entry name" value="Thioesterase/thiol ester dehydrase-isomerase"/>
    <property type="match status" value="1"/>
</dbReference>
<reference key="1">
    <citation type="journal article" date="2003" name="J. Bacteriol.">
        <title>Complete genome sequence of the oral pathogenic bacterium Porphyromonas gingivalis strain W83.</title>
        <authorList>
            <person name="Nelson K.E."/>
            <person name="Fleischmann R.D."/>
            <person name="DeBoy R.T."/>
            <person name="Paulsen I.T."/>
            <person name="Fouts D.E."/>
            <person name="Eisen J.A."/>
            <person name="Daugherty S.C."/>
            <person name="Dodson R.J."/>
            <person name="Durkin A.S."/>
            <person name="Gwinn M.L."/>
            <person name="Haft D.H."/>
            <person name="Kolonay J.F."/>
            <person name="Nelson W.C."/>
            <person name="Mason T.M."/>
            <person name="Tallon L."/>
            <person name="Gray J."/>
            <person name="Granger D."/>
            <person name="Tettelin H."/>
            <person name="Dong H."/>
            <person name="Galvin J.L."/>
            <person name="Duncan M.J."/>
            <person name="Dewhirst F.E."/>
            <person name="Fraser C.M."/>
        </authorList>
    </citation>
    <scope>NUCLEOTIDE SEQUENCE [LARGE SCALE GENOMIC DNA]</scope>
    <source>
        <strain>ATCC BAA-308 / W83</strain>
    </source>
</reference>
<sequence length="462" mass="51691">MQKQQTLKDKFCLQGKGLHTGLDIHITFCPAPEESGYKIKRVDLEGQPVIDAIADNVHSTRRGTVLKKGEVSVSTIEHAMAALYALGVDNCLIEVDAPEFPILDGSAEPYVSEIKRVGLVEQETPRDYYIIKKRMEVSDPESNSKLILLPDDEFTVDVHIAFPSKVLSNQFASLETLSDFEEQIAGARTFVFVREVQMLLEANLIKGGDLDNALVIYDEPLAQDRLDALSDMMGVERKQVNELGYINNKPLIYDNEPARHKLLDVLGDLALIGKYIRGRIIATCPGHSINNKMARLIRKEIKQNEAQAPVYNPNKEPIMDINRIKELLPHRYPFLLVDKIIEVGPDYIVGVKSVSGNEPFFPGHFPGEPVMPGVLQVEAMAQVGGLLVLNTLTEPSSYSTYFLMIDKVKFRRKVVPGDTLVFKLRMISEIRRGVANMRGLAFVGEQLACEAEFMAQIIQNKE</sequence>